<gene>
    <name evidence="1" type="primary">fosB</name>
    <name type="ordered locus">BCAH187_A2143</name>
</gene>
<name>FOSB_BACC7</name>
<feature type="chain" id="PRO_1000146148" description="Metallothiol transferase FosB">
    <location>
        <begin position="1"/>
        <end position="138"/>
    </location>
</feature>
<feature type="domain" description="VOC" evidence="2">
    <location>
        <begin position="4"/>
        <end position="119"/>
    </location>
</feature>
<feature type="active site" description="Proton donor/acceptor" evidence="2">
    <location>
        <position position="115"/>
    </location>
</feature>
<feature type="binding site" evidence="1">
    <location>
        <position position="7"/>
    </location>
    <ligand>
        <name>Mg(2+)</name>
        <dbReference type="ChEBI" id="CHEBI:18420"/>
    </ligand>
</feature>
<feature type="binding site" evidence="1">
    <location>
        <position position="66"/>
    </location>
    <ligand>
        <name>Mg(2+)</name>
        <dbReference type="ChEBI" id="CHEBI:18420"/>
    </ligand>
</feature>
<feature type="binding site" evidence="1">
    <location>
        <position position="115"/>
    </location>
    <ligand>
        <name>Mg(2+)</name>
        <dbReference type="ChEBI" id="CHEBI:18420"/>
    </ligand>
</feature>
<protein>
    <recommendedName>
        <fullName evidence="1">Metallothiol transferase FosB</fullName>
        <ecNumber evidence="1">2.5.1.-</ecNumber>
    </recommendedName>
    <alternativeName>
        <fullName evidence="1">Fosfomycin resistance protein</fullName>
    </alternativeName>
</protein>
<evidence type="ECO:0000255" key="1">
    <source>
        <dbReference type="HAMAP-Rule" id="MF_01512"/>
    </source>
</evidence>
<evidence type="ECO:0000255" key="2">
    <source>
        <dbReference type="PROSITE-ProRule" id="PRU01163"/>
    </source>
</evidence>
<accession>B7HNI5</accession>
<reference key="1">
    <citation type="submission" date="2008-10" db="EMBL/GenBank/DDBJ databases">
        <title>Genome sequence of Bacillus cereus AH187.</title>
        <authorList>
            <person name="Dodson R.J."/>
            <person name="Durkin A.S."/>
            <person name="Rosovitz M.J."/>
            <person name="Rasko D.A."/>
            <person name="Kolsto A.B."/>
            <person name="Okstad O.A."/>
            <person name="Ravel J."/>
            <person name="Sutton G."/>
        </authorList>
    </citation>
    <scope>NUCLEOTIDE SEQUENCE [LARGE SCALE GENOMIC DNA]</scope>
    <source>
        <strain>AH187</strain>
    </source>
</reference>
<proteinExistence type="inferred from homology"/>
<sequence length="138" mass="16452">MLKGINHLCFSVSNLEDSITFYEKVLEGELLVRGRKLAYFNICGVWIALNEEIHIPRNEIHQSYTHIAFSVEQKDFERLLQRLEENDVHILQGRERDVRDCESIYFVDPDGHKFEFHSGTLQDRLNYYREGKPHMTFY</sequence>
<organism>
    <name type="scientific">Bacillus cereus (strain AH187)</name>
    <dbReference type="NCBI Taxonomy" id="405534"/>
    <lineage>
        <taxon>Bacteria</taxon>
        <taxon>Bacillati</taxon>
        <taxon>Bacillota</taxon>
        <taxon>Bacilli</taxon>
        <taxon>Bacillales</taxon>
        <taxon>Bacillaceae</taxon>
        <taxon>Bacillus</taxon>
        <taxon>Bacillus cereus group</taxon>
    </lineage>
</organism>
<comment type="function">
    <text evidence="1">Metallothiol transferase which confers resistance to fosfomycin by catalyzing the addition of a thiol cofactor to fosfomycin. L-cysteine is probably the physiological thiol donor.</text>
</comment>
<comment type="cofactor">
    <cofactor evidence="1">
        <name>Mg(2+)</name>
        <dbReference type="ChEBI" id="CHEBI:18420"/>
    </cofactor>
</comment>
<comment type="subunit">
    <text evidence="1">Homodimer.</text>
</comment>
<comment type="subcellular location">
    <subcellularLocation>
        <location evidence="1">Cytoplasm</location>
    </subcellularLocation>
</comment>
<comment type="similarity">
    <text evidence="1">Belongs to the fosfomycin resistance protein family. FosB subfamily.</text>
</comment>
<dbReference type="EC" id="2.5.1.-" evidence="1"/>
<dbReference type="EMBL" id="CP001177">
    <property type="protein sequence ID" value="ACJ79839.1"/>
    <property type="molecule type" value="Genomic_DNA"/>
</dbReference>
<dbReference type="SMR" id="B7HNI5"/>
<dbReference type="KEGG" id="bcr:BCAH187_A2143"/>
<dbReference type="HOGENOM" id="CLU_121356_0_0_9"/>
<dbReference type="Proteomes" id="UP000002214">
    <property type="component" value="Chromosome"/>
</dbReference>
<dbReference type="GO" id="GO:0005737">
    <property type="term" value="C:cytoplasm"/>
    <property type="evidence" value="ECO:0007669"/>
    <property type="project" value="UniProtKB-SubCell"/>
</dbReference>
<dbReference type="GO" id="GO:0000287">
    <property type="term" value="F:magnesium ion binding"/>
    <property type="evidence" value="ECO:0007669"/>
    <property type="project" value="UniProtKB-UniRule"/>
</dbReference>
<dbReference type="GO" id="GO:0016765">
    <property type="term" value="F:transferase activity, transferring alkyl or aryl (other than methyl) groups"/>
    <property type="evidence" value="ECO:0007669"/>
    <property type="project" value="UniProtKB-UniRule"/>
</dbReference>
<dbReference type="GO" id="GO:0046677">
    <property type="term" value="P:response to antibiotic"/>
    <property type="evidence" value="ECO:0007669"/>
    <property type="project" value="UniProtKB-UniRule"/>
</dbReference>
<dbReference type="FunFam" id="3.10.180.10:FF:000015">
    <property type="entry name" value="Metallothiol transferase FosB"/>
    <property type="match status" value="1"/>
</dbReference>
<dbReference type="Gene3D" id="3.10.180.10">
    <property type="entry name" value="2,3-Dihydroxybiphenyl 1,2-Dioxygenase, domain 1"/>
    <property type="match status" value="1"/>
</dbReference>
<dbReference type="HAMAP" id="MF_01512">
    <property type="entry name" value="FosB"/>
    <property type="match status" value="1"/>
</dbReference>
<dbReference type="InterPro" id="IPR051332">
    <property type="entry name" value="Fosfomycin_Res_Enzymes"/>
</dbReference>
<dbReference type="InterPro" id="IPR029068">
    <property type="entry name" value="Glyas_Bleomycin-R_OHBP_Dase"/>
</dbReference>
<dbReference type="InterPro" id="IPR004360">
    <property type="entry name" value="Glyas_Fos-R_dOase_dom"/>
</dbReference>
<dbReference type="InterPro" id="IPR022858">
    <property type="entry name" value="Metallothiol_Trafse_FosB"/>
</dbReference>
<dbReference type="InterPro" id="IPR037523">
    <property type="entry name" value="VOC"/>
</dbReference>
<dbReference type="NCBIfam" id="NF000493">
    <property type="entry name" value="Fos_BSH"/>
    <property type="match status" value="1"/>
</dbReference>
<dbReference type="NCBIfam" id="NF041541">
    <property type="entry name" value="fosBx1_fam"/>
    <property type="match status" value="1"/>
</dbReference>
<dbReference type="NCBIfam" id="NF003152">
    <property type="entry name" value="PRK04101.1"/>
    <property type="match status" value="1"/>
</dbReference>
<dbReference type="PANTHER" id="PTHR36113:SF6">
    <property type="entry name" value="FOSFOMYCIN RESISTANCE PROTEIN FOSX"/>
    <property type="match status" value="1"/>
</dbReference>
<dbReference type="PANTHER" id="PTHR36113">
    <property type="entry name" value="LYASE, PUTATIVE-RELATED-RELATED"/>
    <property type="match status" value="1"/>
</dbReference>
<dbReference type="Pfam" id="PF00903">
    <property type="entry name" value="Glyoxalase"/>
    <property type="match status" value="1"/>
</dbReference>
<dbReference type="SUPFAM" id="SSF54593">
    <property type="entry name" value="Glyoxalase/Bleomycin resistance protein/Dihydroxybiphenyl dioxygenase"/>
    <property type="match status" value="1"/>
</dbReference>
<dbReference type="PROSITE" id="PS51819">
    <property type="entry name" value="VOC"/>
    <property type="match status" value="1"/>
</dbReference>
<keyword id="KW-0046">Antibiotic resistance</keyword>
<keyword id="KW-0963">Cytoplasm</keyword>
<keyword id="KW-0460">Magnesium</keyword>
<keyword id="KW-0479">Metal-binding</keyword>
<keyword id="KW-0808">Transferase</keyword>